<name>PYRD_PSEA6</name>
<keyword id="KW-1003">Cell membrane</keyword>
<keyword id="KW-0285">Flavoprotein</keyword>
<keyword id="KW-0288">FMN</keyword>
<keyword id="KW-0472">Membrane</keyword>
<keyword id="KW-0560">Oxidoreductase</keyword>
<keyword id="KW-0665">Pyrimidine biosynthesis</keyword>
<comment type="function">
    <text evidence="1">Catalyzes the conversion of dihydroorotate to orotate with quinone as electron acceptor.</text>
</comment>
<comment type="catalytic activity">
    <reaction evidence="1">
        <text>(S)-dihydroorotate + a quinone = orotate + a quinol</text>
        <dbReference type="Rhea" id="RHEA:30187"/>
        <dbReference type="ChEBI" id="CHEBI:24646"/>
        <dbReference type="ChEBI" id="CHEBI:30839"/>
        <dbReference type="ChEBI" id="CHEBI:30864"/>
        <dbReference type="ChEBI" id="CHEBI:132124"/>
        <dbReference type="EC" id="1.3.5.2"/>
    </reaction>
</comment>
<comment type="cofactor">
    <cofactor evidence="1">
        <name>FMN</name>
        <dbReference type="ChEBI" id="CHEBI:58210"/>
    </cofactor>
    <text evidence="1">Binds 1 FMN per subunit.</text>
</comment>
<comment type="pathway">
    <text evidence="1">Pyrimidine metabolism; UMP biosynthesis via de novo pathway; orotate from (S)-dihydroorotate (quinone route): step 1/1.</text>
</comment>
<comment type="subunit">
    <text evidence="1">Monomer.</text>
</comment>
<comment type="subcellular location">
    <subcellularLocation>
        <location evidence="1">Cell membrane</location>
        <topology evidence="1">Peripheral membrane protein</topology>
    </subcellularLocation>
</comment>
<comment type="similarity">
    <text evidence="1">Belongs to the dihydroorotate dehydrogenase family. Type 2 subfamily.</text>
</comment>
<sequence>MYAILQKFLFTQDAEWSHDFTINWLKRTQHNFLNVAYKQHIDDKPVEFLGITFKNPVGLAAGLDKNAECIDAFAAMGFGFIEVGTVTPKAQAGNDKPRMFRLPAGQAIINRMGFNNKGVDYLVEQVKQAKYKGVLGINIGKNKTTPEDEALNDYLICLRKVYAHASYVTVNISSPNTPGLRNLQYGDALTQLLEGLKEEQANLEVKHNKRVPILIKIAPDLEDSELDSMVDSFLTVGIDGVIATNTTLDRDRVKGQEHAEEAGGLSGSVLTDKSQQIVSSLCTKLAGNVPVIGVGGIDSPHAAKARIEAGSPLIQVYSALIYQGPKLIKEIVDSL</sequence>
<gene>
    <name evidence="1" type="primary">pyrD</name>
    <name type="ordered locus">Patl_2003</name>
</gene>
<accession>Q15UB7</accession>
<reference key="1">
    <citation type="submission" date="2006-06" db="EMBL/GenBank/DDBJ databases">
        <title>Complete sequence of Pseudoalteromonas atlantica T6c.</title>
        <authorList>
            <consortium name="US DOE Joint Genome Institute"/>
            <person name="Copeland A."/>
            <person name="Lucas S."/>
            <person name="Lapidus A."/>
            <person name="Barry K."/>
            <person name="Detter J.C."/>
            <person name="Glavina del Rio T."/>
            <person name="Hammon N."/>
            <person name="Israni S."/>
            <person name="Dalin E."/>
            <person name="Tice H."/>
            <person name="Pitluck S."/>
            <person name="Saunders E."/>
            <person name="Brettin T."/>
            <person name="Bruce D."/>
            <person name="Han C."/>
            <person name="Tapia R."/>
            <person name="Gilna P."/>
            <person name="Schmutz J."/>
            <person name="Larimer F."/>
            <person name="Land M."/>
            <person name="Hauser L."/>
            <person name="Kyrpides N."/>
            <person name="Kim E."/>
            <person name="Karls A.C."/>
            <person name="Bartlett D."/>
            <person name="Higgins B.P."/>
            <person name="Richardson P."/>
        </authorList>
    </citation>
    <scope>NUCLEOTIDE SEQUENCE [LARGE SCALE GENOMIC DNA]</scope>
    <source>
        <strain>T6c / ATCC BAA-1087</strain>
    </source>
</reference>
<evidence type="ECO:0000255" key="1">
    <source>
        <dbReference type="HAMAP-Rule" id="MF_00225"/>
    </source>
</evidence>
<organism>
    <name type="scientific">Pseudoalteromonas atlantica (strain T6c / ATCC BAA-1087)</name>
    <dbReference type="NCBI Taxonomy" id="3042615"/>
    <lineage>
        <taxon>Bacteria</taxon>
        <taxon>Pseudomonadati</taxon>
        <taxon>Pseudomonadota</taxon>
        <taxon>Gammaproteobacteria</taxon>
        <taxon>Alteromonadales</taxon>
        <taxon>Alteromonadaceae</taxon>
        <taxon>Paraglaciecola</taxon>
    </lineage>
</organism>
<proteinExistence type="inferred from homology"/>
<protein>
    <recommendedName>
        <fullName evidence="1">Dihydroorotate dehydrogenase (quinone)</fullName>
        <ecNumber evidence="1">1.3.5.2</ecNumber>
    </recommendedName>
    <alternativeName>
        <fullName evidence="1">DHOdehase</fullName>
        <shortName evidence="1">DHOD</shortName>
        <shortName evidence="1">DHODase</shortName>
    </alternativeName>
    <alternativeName>
        <fullName evidence="1">Dihydroorotate oxidase</fullName>
    </alternativeName>
</protein>
<dbReference type="EC" id="1.3.5.2" evidence="1"/>
<dbReference type="EMBL" id="CP000388">
    <property type="protein sequence ID" value="ABG40521.1"/>
    <property type="molecule type" value="Genomic_DNA"/>
</dbReference>
<dbReference type="RefSeq" id="WP_011574814.1">
    <property type="nucleotide sequence ID" value="NC_008228.1"/>
</dbReference>
<dbReference type="SMR" id="Q15UB7"/>
<dbReference type="STRING" id="342610.Patl_2003"/>
<dbReference type="KEGG" id="pat:Patl_2003"/>
<dbReference type="eggNOG" id="COG0167">
    <property type="taxonomic scope" value="Bacteria"/>
</dbReference>
<dbReference type="HOGENOM" id="CLU_013640_2_0_6"/>
<dbReference type="OrthoDB" id="9802377at2"/>
<dbReference type="UniPathway" id="UPA00070">
    <property type="reaction ID" value="UER00946"/>
</dbReference>
<dbReference type="Proteomes" id="UP000001981">
    <property type="component" value="Chromosome"/>
</dbReference>
<dbReference type="GO" id="GO:0005737">
    <property type="term" value="C:cytoplasm"/>
    <property type="evidence" value="ECO:0007669"/>
    <property type="project" value="InterPro"/>
</dbReference>
<dbReference type="GO" id="GO:0005886">
    <property type="term" value="C:plasma membrane"/>
    <property type="evidence" value="ECO:0007669"/>
    <property type="project" value="UniProtKB-SubCell"/>
</dbReference>
<dbReference type="GO" id="GO:0106430">
    <property type="term" value="F:dihydroorotate dehydrogenase (quinone) activity"/>
    <property type="evidence" value="ECO:0007669"/>
    <property type="project" value="UniProtKB-EC"/>
</dbReference>
<dbReference type="GO" id="GO:0006207">
    <property type="term" value="P:'de novo' pyrimidine nucleobase biosynthetic process"/>
    <property type="evidence" value="ECO:0007669"/>
    <property type="project" value="InterPro"/>
</dbReference>
<dbReference type="GO" id="GO:0044205">
    <property type="term" value="P:'de novo' UMP biosynthetic process"/>
    <property type="evidence" value="ECO:0007669"/>
    <property type="project" value="UniProtKB-UniRule"/>
</dbReference>
<dbReference type="CDD" id="cd04738">
    <property type="entry name" value="DHOD_2_like"/>
    <property type="match status" value="1"/>
</dbReference>
<dbReference type="FunFam" id="3.20.20.70:FF:000028">
    <property type="entry name" value="Dihydroorotate dehydrogenase (quinone)"/>
    <property type="match status" value="1"/>
</dbReference>
<dbReference type="Gene3D" id="3.20.20.70">
    <property type="entry name" value="Aldolase class I"/>
    <property type="match status" value="1"/>
</dbReference>
<dbReference type="HAMAP" id="MF_00225">
    <property type="entry name" value="DHO_dh_type2"/>
    <property type="match status" value="1"/>
</dbReference>
<dbReference type="InterPro" id="IPR013785">
    <property type="entry name" value="Aldolase_TIM"/>
</dbReference>
<dbReference type="InterPro" id="IPR050074">
    <property type="entry name" value="DHO_dehydrogenase"/>
</dbReference>
<dbReference type="InterPro" id="IPR012135">
    <property type="entry name" value="Dihydroorotate_DH_1_2"/>
</dbReference>
<dbReference type="InterPro" id="IPR005719">
    <property type="entry name" value="Dihydroorotate_DH_2"/>
</dbReference>
<dbReference type="InterPro" id="IPR005720">
    <property type="entry name" value="Dihydroorotate_DH_cat"/>
</dbReference>
<dbReference type="InterPro" id="IPR001295">
    <property type="entry name" value="Dihydroorotate_DH_CS"/>
</dbReference>
<dbReference type="NCBIfam" id="NF003644">
    <property type="entry name" value="PRK05286.1-1"/>
    <property type="match status" value="1"/>
</dbReference>
<dbReference type="NCBIfam" id="NF003645">
    <property type="entry name" value="PRK05286.1-2"/>
    <property type="match status" value="1"/>
</dbReference>
<dbReference type="NCBIfam" id="NF003646">
    <property type="entry name" value="PRK05286.1-4"/>
    <property type="match status" value="1"/>
</dbReference>
<dbReference type="NCBIfam" id="NF003652">
    <property type="entry name" value="PRK05286.2-5"/>
    <property type="match status" value="1"/>
</dbReference>
<dbReference type="NCBIfam" id="TIGR01036">
    <property type="entry name" value="pyrD_sub2"/>
    <property type="match status" value="1"/>
</dbReference>
<dbReference type="PANTHER" id="PTHR48109:SF4">
    <property type="entry name" value="DIHYDROOROTATE DEHYDROGENASE (QUINONE), MITOCHONDRIAL"/>
    <property type="match status" value="1"/>
</dbReference>
<dbReference type="PANTHER" id="PTHR48109">
    <property type="entry name" value="DIHYDROOROTATE DEHYDROGENASE (QUINONE), MITOCHONDRIAL-RELATED"/>
    <property type="match status" value="1"/>
</dbReference>
<dbReference type="Pfam" id="PF01180">
    <property type="entry name" value="DHO_dh"/>
    <property type="match status" value="1"/>
</dbReference>
<dbReference type="PIRSF" id="PIRSF000164">
    <property type="entry name" value="DHO_oxidase"/>
    <property type="match status" value="1"/>
</dbReference>
<dbReference type="SUPFAM" id="SSF51395">
    <property type="entry name" value="FMN-linked oxidoreductases"/>
    <property type="match status" value="1"/>
</dbReference>
<dbReference type="PROSITE" id="PS00911">
    <property type="entry name" value="DHODEHASE_1"/>
    <property type="match status" value="1"/>
</dbReference>
<feature type="chain" id="PRO_1000024197" description="Dihydroorotate dehydrogenase (quinone)">
    <location>
        <begin position="1"/>
        <end position="335"/>
    </location>
</feature>
<feature type="active site" description="Nucleophile" evidence="1">
    <location>
        <position position="174"/>
    </location>
</feature>
<feature type="binding site" evidence="1">
    <location>
        <begin position="61"/>
        <end position="65"/>
    </location>
    <ligand>
        <name>FMN</name>
        <dbReference type="ChEBI" id="CHEBI:58210"/>
    </ligand>
</feature>
<feature type="binding site" evidence="1">
    <location>
        <position position="65"/>
    </location>
    <ligand>
        <name>substrate</name>
    </ligand>
</feature>
<feature type="binding site" evidence="1">
    <location>
        <position position="85"/>
    </location>
    <ligand>
        <name>FMN</name>
        <dbReference type="ChEBI" id="CHEBI:58210"/>
    </ligand>
</feature>
<feature type="binding site" evidence="1">
    <location>
        <begin position="110"/>
        <end position="114"/>
    </location>
    <ligand>
        <name>substrate</name>
    </ligand>
</feature>
<feature type="binding site" evidence="1">
    <location>
        <position position="138"/>
    </location>
    <ligand>
        <name>FMN</name>
        <dbReference type="ChEBI" id="CHEBI:58210"/>
    </ligand>
</feature>
<feature type="binding site" evidence="1">
    <location>
        <position position="171"/>
    </location>
    <ligand>
        <name>FMN</name>
        <dbReference type="ChEBI" id="CHEBI:58210"/>
    </ligand>
</feature>
<feature type="binding site" evidence="1">
    <location>
        <position position="171"/>
    </location>
    <ligand>
        <name>substrate</name>
    </ligand>
</feature>
<feature type="binding site" evidence="1">
    <location>
        <position position="176"/>
    </location>
    <ligand>
        <name>substrate</name>
    </ligand>
</feature>
<feature type="binding site" evidence="1">
    <location>
        <position position="216"/>
    </location>
    <ligand>
        <name>FMN</name>
        <dbReference type="ChEBI" id="CHEBI:58210"/>
    </ligand>
</feature>
<feature type="binding site" evidence="1">
    <location>
        <position position="244"/>
    </location>
    <ligand>
        <name>FMN</name>
        <dbReference type="ChEBI" id="CHEBI:58210"/>
    </ligand>
</feature>
<feature type="binding site" evidence="1">
    <location>
        <begin position="245"/>
        <end position="246"/>
    </location>
    <ligand>
        <name>substrate</name>
    </ligand>
</feature>
<feature type="binding site" evidence="1">
    <location>
        <position position="267"/>
    </location>
    <ligand>
        <name>FMN</name>
        <dbReference type="ChEBI" id="CHEBI:58210"/>
    </ligand>
</feature>
<feature type="binding site" evidence="1">
    <location>
        <position position="296"/>
    </location>
    <ligand>
        <name>FMN</name>
        <dbReference type="ChEBI" id="CHEBI:58210"/>
    </ligand>
</feature>
<feature type="binding site" evidence="1">
    <location>
        <begin position="317"/>
        <end position="318"/>
    </location>
    <ligand>
        <name>FMN</name>
        <dbReference type="ChEBI" id="CHEBI:58210"/>
    </ligand>
</feature>